<feature type="signal peptide" evidence="3">
    <location>
        <begin position="1"/>
        <end position="18"/>
    </location>
</feature>
<feature type="chain" id="PRO_0000454021" description="Apolipoprotein E">
    <location>
        <begin position="19"/>
        <end position="316"/>
    </location>
</feature>
<feature type="repeat" description="1">
    <location>
        <begin position="76"/>
        <end position="97"/>
    </location>
</feature>
<feature type="repeat" description="2">
    <location>
        <begin position="98"/>
        <end position="119"/>
    </location>
</feature>
<feature type="repeat" description="3">
    <location>
        <begin position="120"/>
        <end position="141"/>
    </location>
</feature>
<feature type="repeat" description="4">
    <location>
        <begin position="142"/>
        <end position="163"/>
    </location>
</feature>
<feature type="repeat" description="5">
    <location>
        <begin position="164"/>
        <end position="185"/>
    </location>
</feature>
<feature type="repeat" description="6">
    <location>
        <begin position="186"/>
        <end position="207"/>
    </location>
</feature>
<feature type="repeat" description="7">
    <location>
        <begin position="208"/>
        <end position="229"/>
    </location>
</feature>
<feature type="repeat" description="8">
    <location>
        <begin position="230"/>
        <end position="251"/>
    </location>
</feature>
<feature type="region of interest" description="8 X 22 AA approximate tandem repeats">
    <location>
        <begin position="76"/>
        <end position="251"/>
    </location>
</feature>
<feature type="region of interest" description="LDL and other lipoprotein receptors binding" evidence="1">
    <location>
        <begin position="154"/>
        <end position="164"/>
    </location>
</feature>
<feature type="region of interest" description="Lipid-binding and lipoprotein association" evidence="1">
    <location>
        <begin position="206"/>
        <end position="286"/>
    </location>
</feature>
<feature type="region of interest" description="Homooligomerization" evidence="1">
    <location>
        <begin position="262"/>
        <end position="316"/>
    </location>
</feature>
<feature type="region of interest" description="Specificity for association with VLDL" evidence="1">
    <location>
        <begin position="274"/>
        <end position="286"/>
    </location>
</feature>
<feature type="binding site" evidence="1">
    <location>
        <begin position="158"/>
        <end position="161"/>
    </location>
    <ligand>
        <name>heparin</name>
        <dbReference type="ChEBI" id="CHEBI:28304"/>
    </ligand>
</feature>
<feature type="binding site" evidence="1">
    <location>
        <begin position="225"/>
        <end position="232"/>
    </location>
    <ligand>
        <name>heparin</name>
        <dbReference type="ChEBI" id="CHEBI:28304"/>
    </ligand>
</feature>
<feature type="modified residue" description="Methionine sulfoxide" evidence="2">
    <location>
        <position position="139"/>
    </location>
</feature>
<feature type="modified residue" description="Phosphoserine" evidence="2">
    <location>
        <position position="143"/>
    </location>
</feature>
<comment type="function">
    <text evidence="1">APOE is an apolipoprotein, a protein associating with lipid particles, that mainly functions in lipoprotein-mediated lipid transport between organs via the plasma and interstitial fluids. APOE is a core component of plasma lipoproteins and is involved in their production, conversion and clearance. Apolipoproteins are amphipathic molecules that interact both with lipids of the lipoprotein particle core and the aqueous environment of the plasma. As such, APOE associates with chylomicrons, chylomicron remnants, very low density lipoproteins (VLDL) and intermediate density lipoproteins (IDL) but shows a preferential binding to high-density lipoproteins (HDL). It also binds a wide range of cellular receptors including the LDL receptor/LDLR, the LDL receptor-related proteins LRP1, LRP2 and LRP8 and the very low-density lipoprotein receptor/VLDLR that mediate the cellular uptake of the APOE-containing lipoprotein particles. Finally, APOE also has a heparin-binding activity and binds heparan-sulfate proteoglycans on the surface of cells, a property that supports the capture and the receptor-mediated uptake of APOE-containing lipoproteins by cells. A main function of APOE is to mediate lipoprotein clearance through the uptake of chylomicrons, VLDLs, and HDLs by hepatocytes. APOE is also involved in the biosynthesis by the liver of VLDLs as well as their uptake by peripheral tissues ensuring the delivery of triglycerides and energy storage in muscle, heart and adipose tissues. By participating in the lipoprotein-mediated distribution of lipids among tissues, APOE plays a critical role in plasma and tissues lipid homeostasis. APOE is also involved in two steps of reverse cholesterol transport, the HDLs-mediated transport of cholesterol from peripheral tissues to the liver, and thereby plays an important role in cholesterol homeostasis. First, it is functionally associated with ABCA1 in the biogenesis of HDLs in tissues. Second, it is enriched in circulating HDLs and mediates their uptake by hepatocytes. APOE also plays an important role in lipid transport in the central nervous system, regulating neuron survival and sprouting.</text>
</comment>
<comment type="subunit">
    <text evidence="1">Homotetramer. May interact with ABCA1; functionally associated with ABCA1 in the biogenesis of HDLs. May interact with APP/A4 amyloid-beta peptide; the interaction is extremely stable in vitro but its physiological significance is unclear. May interact with MAPT. May interact with MAP2. In the cerebrospinal fluid, interacts with secreted SORL1. Interacts with PMEL; this allows the loading of PMEL luminal fragment on ILVs to induce fibril nucleation.</text>
</comment>
<comment type="subcellular location">
    <subcellularLocation>
        <location evidence="1">Secreted</location>
    </subcellularLocation>
    <subcellularLocation>
        <location evidence="1">Secreted</location>
        <location evidence="1">Extracellular space</location>
    </subcellularLocation>
    <subcellularLocation>
        <location evidence="1">Secreted</location>
        <location evidence="1">Extracellular space</location>
        <location evidence="1">Extracellular matrix</location>
    </subcellularLocation>
    <subcellularLocation>
        <location evidence="1">Extracellular vesicle</location>
    </subcellularLocation>
    <subcellularLocation>
        <location evidence="1">Endosome</location>
        <location evidence="1">Multivesicular body</location>
    </subcellularLocation>
    <text evidence="1">In the plasma, APOE is associated with chylomicrons, chylomicrons remnants, VLDL, LDL and HDL lipoproteins. Lipid poor oligomeric APOE is associated with the extracellular matrix in a calcium- and heparan-sulfate proteoglycans-dependent manner. Lipidation induces the release from the extracellular matrix. Colocalizes with CD63 and PMEL at exosomes and in intraluminal vesicles within multivesicular endosomes.</text>
</comment>
<comment type="PTM">
    <text evidence="1">APOE exists as multiple glycosylated and sialylated glycoforms within cells and in plasma. The extent of glycosylation and sialylation are tissue and context specific.</text>
</comment>
<comment type="PTM">
    <text evidence="1">Glycated in plasma VLDL.</text>
</comment>
<comment type="PTM">
    <text evidence="1">Phosphorylated by FAM20C in the extracellular medium.</text>
</comment>
<comment type="similarity">
    <text evidence="4">Belongs to the apolipoprotein A1/A4/E family.</text>
</comment>
<keyword id="KW-0162">Chylomicron</keyword>
<keyword id="KW-0967">Endosome</keyword>
<keyword id="KW-0272">Extracellular matrix</keyword>
<keyword id="KW-0325">Glycoprotein</keyword>
<keyword id="KW-0345">HDL</keyword>
<keyword id="KW-0358">Heparin-binding</keyword>
<keyword id="KW-0445">Lipid transport</keyword>
<keyword id="KW-0446">Lipid-binding</keyword>
<keyword id="KW-0558">Oxidation</keyword>
<keyword id="KW-0597">Phosphoprotein</keyword>
<keyword id="KW-0677">Repeat</keyword>
<keyword id="KW-0964">Secreted</keyword>
<keyword id="KW-0732">Signal</keyword>
<keyword id="KW-0813">Transport</keyword>
<keyword id="KW-0850">VLDL</keyword>
<protein>
    <recommendedName>
        <fullName>Apolipoprotein E</fullName>
        <shortName>Apo-E</shortName>
    </recommendedName>
</protein>
<proteinExistence type="inferred from homology"/>
<reference key="1">
    <citation type="journal article" date="2019" name="Sci. Adv.">
        <title>The genome of Peromyscus leucopus, natural host for Lyme disease and other emerging infections.</title>
        <authorList>
            <person name="Long A.D."/>
            <person name="Baldwin-Brown J."/>
            <person name="Tao Y."/>
            <person name="Cook V.J."/>
            <person name="Balderrama-Gutierrez G."/>
            <person name="Corbett-Detig R."/>
            <person name="Mortazavi A."/>
            <person name="Barbour A.G."/>
        </authorList>
    </citation>
    <scope>NUCLEOTIDE SEQUENCE [LARGE SCALE GENOMIC DNA]</scope>
</reference>
<organism>
    <name type="scientific">Peromyscus leucopus</name>
    <name type="common">White-footed mouse</name>
    <dbReference type="NCBI Taxonomy" id="10041"/>
    <lineage>
        <taxon>Eukaryota</taxon>
        <taxon>Metazoa</taxon>
        <taxon>Chordata</taxon>
        <taxon>Craniata</taxon>
        <taxon>Vertebrata</taxon>
        <taxon>Euteleostomi</taxon>
        <taxon>Mammalia</taxon>
        <taxon>Eutheria</taxon>
        <taxon>Euarchontoglires</taxon>
        <taxon>Glires</taxon>
        <taxon>Rodentia</taxon>
        <taxon>Myomorpha</taxon>
        <taxon>Muroidea</taxon>
        <taxon>Cricetidae</taxon>
        <taxon>Neotominae</taxon>
        <taxon>Peromyscus</taxon>
    </lineage>
</organism>
<dbReference type="EMBL" id="NMRJ02000002">
    <property type="status" value="NOT_ANNOTATED_CDS"/>
    <property type="molecule type" value="Genomic_DNA"/>
</dbReference>
<dbReference type="RefSeq" id="XP_028749661.1">
    <property type="nucleotide sequence ID" value="XM_028893828.2"/>
</dbReference>
<dbReference type="SMR" id="P0DUZ7"/>
<dbReference type="GeneID" id="114709849"/>
<dbReference type="GO" id="GO:0042627">
    <property type="term" value="C:chylomicron"/>
    <property type="evidence" value="ECO:0007669"/>
    <property type="project" value="UniProtKB-KW"/>
</dbReference>
<dbReference type="GO" id="GO:0070062">
    <property type="term" value="C:extracellular exosome"/>
    <property type="evidence" value="ECO:0000250"/>
    <property type="project" value="UniProtKB"/>
</dbReference>
<dbReference type="GO" id="GO:0034364">
    <property type="term" value="C:high-density lipoprotein particle"/>
    <property type="evidence" value="ECO:0007669"/>
    <property type="project" value="UniProtKB-KW"/>
</dbReference>
<dbReference type="GO" id="GO:0034362">
    <property type="term" value="C:low-density lipoprotein particle"/>
    <property type="evidence" value="ECO:0007669"/>
    <property type="project" value="TreeGrafter"/>
</dbReference>
<dbReference type="GO" id="GO:0097487">
    <property type="term" value="C:multivesicular body, internal vesicle"/>
    <property type="evidence" value="ECO:0000250"/>
    <property type="project" value="UniProtKB"/>
</dbReference>
<dbReference type="GO" id="GO:0034361">
    <property type="term" value="C:very-low-density lipoprotein particle"/>
    <property type="evidence" value="ECO:0007669"/>
    <property type="project" value="UniProtKB-KW"/>
</dbReference>
<dbReference type="GO" id="GO:0120020">
    <property type="term" value="F:cholesterol transfer activity"/>
    <property type="evidence" value="ECO:0007669"/>
    <property type="project" value="TreeGrafter"/>
</dbReference>
<dbReference type="GO" id="GO:0008201">
    <property type="term" value="F:heparin binding"/>
    <property type="evidence" value="ECO:0007669"/>
    <property type="project" value="UniProtKB-KW"/>
</dbReference>
<dbReference type="GO" id="GO:0060228">
    <property type="term" value="F:phosphatidylcholine-sterol O-acyltransferase activator activity"/>
    <property type="evidence" value="ECO:0007669"/>
    <property type="project" value="TreeGrafter"/>
</dbReference>
<dbReference type="GO" id="GO:0005543">
    <property type="term" value="F:phospholipid binding"/>
    <property type="evidence" value="ECO:0007669"/>
    <property type="project" value="TreeGrafter"/>
</dbReference>
<dbReference type="GO" id="GO:0055090">
    <property type="term" value="P:acylglycerol homeostasis"/>
    <property type="evidence" value="ECO:0007669"/>
    <property type="project" value="TreeGrafter"/>
</dbReference>
<dbReference type="GO" id="GO:0033344">
    <property type="term" value="P:cholesterol efflux"/>
    <property type="evidence" value="ECO:0007669"/>
    <property type="project" value="TreeGrafter"/>
</dbReference>
<dbReference type="GO" id="GO:0008203">
    <property type="term" value="P:cholesterol metabolic process"/>
    <property type="evidence" value="ECO:0007669"/>
    <property type="project" value="TreeGrafter"/>
</dbReference>
<dbReference type="GO" id="GO:0042157">
    <property type="term" value="P:lipoprotein metabolic process"/>
    <property type="evidence" value="ECO:0007669"/>
    <property type="project" value="InterPro"/>
</dbReference>
<dbReference type="GO" id="GO:0032438">
    <property type="term" value="P:melanosome organization"/>
    <property type="evidence" value="ECO:0000250"/>
    <property type="project" value="UniProtKB"/>
</dbReference>
<dbReference type="GO" id="GO:0033700">
    <property type="term" value="P:phospholipid efflux"/>
    <property type="evidence" value="ECO:0007669"/>
    <property type="project" value="TreeGrafter"/>
</dbReference>
<dbReference type="FunFam" id="1.20.120.20:FF:000002">
    <property type="entry name" value="Apolipoprotein E"/>
    <property type="match status" value="1"/>
</dbReference>
<dbReference type="FunFam" id="1.20.120.20:FF:000003">
    <property type="entry name" value="Apolipoprotein E"/>
    <property type="match status" value="1"/>
</dbReference>
<dbReference type="Gene3D" id="1.20.120.20">
    <property type="entry name" value="Apolipoprotein"/>
    <property type="match status" value="2"/>
</dbReference>
<dbReference type="InterPro" id="IPR000074">
    <property type="entry name" value="ApoA_E"/>
</dbReference>
<dbReference type="InterPro" id="IPR050163">
    <property type="entry name" value="Apolipoprotein_A1/A4/E"/>
</dbReference>
<dbReference type="PANTHER" id="PTHR18976">
    <property type="entry name" value="APOLIPOPROTEIN"/>
    <property type="match status" value="1"/>
</dbReference>
<dbReference type="PANTHER" id="PTHR18976:SF2">
    <property type="entry name" value="APOLIPOPROTEIN E"/>
    <property type="match status" value="1"/>
</dbReference>
<dbReference type="Pfam" id="PF01442">
    <property type="entry name" value="Apolipoprotein"/>
    <property type="match status" value="1"/>
</dbReference>
<dbReference type="SUPFAM" id="SSF58113">
    <property type="entry name" value="Apolipoprotein A-I"/>
    <property type="match status" value="1"/>
</dbReference>
<evidence type="ECO:0000250" key="1">
    <source>
        <dbReference type="UniProtKB" id="P02649"/>
    </source>
</evidence>
<evidence type="ECO:0000250" key="2">
    <source>
        <dbReference type="UniProtKB" id="P08226"/>
    </source>
</evidence>
<evidence type="ECO:0000255" key="3"/>
<evidence type="ECO:0000305" key="4"/>
<name>APOE_PERLE</name>
<sequence length="316" mass="35985">MKALWAVLVVTLLAGCLAEGEPELEPEVTDRLAWQSGQPWEVALGRFWDYLRWVQTLSDQVQEELQSSQVTQELTVLMEDTMTELKAYKKELEEQLGPMAEETRARLAKEVQAAQSRLGADMEDLRNRLAQYRNEVHTMLGQSTEELRARLSTHLRKLRKRLMRDAEDLQKRLAVYKAGAREGAERGVGAIRERLGPLVEQGRQRTANLGAGAGKPLQDRAQALGARIRGRLEEVGNQARDRLEEMREQMEEVRAKVEEQAQQMRLQAEIFQARLKGWFEPLVEDMQRQWANLVEKIQASVAANPIPPSSVPQESP</sequence>
<gene>
    <name type="primary">Apoe</name>
</gene>
<accession>P0DUZ7</accession>